<protein>
    <recommendedName>
        <fullName>Histone-lysine N-methyltransferase, H3 lysine-36 specific</fullName>
        <ecNumber evidence="2">2.1.1.359</ecNumber>
    </recommendedName>
    <alternativeName>
        <fullName>SET domain-containing protein 2</fullName>
    </alternativeName>
</protein>
<proteinExistence type="inferred from homology"/>
<accession>P0CO29</accession>
<accession>Q55PX0</accession>
<accession>Q5KDJ0</accession>
<evidence type="ECO:0000250" key="1"/>
<evidence type="ECO:0000250" key="2">
    <source>
        <dbReference type="UniProtKB" id="P46995"/>
    </source>
</evidence>
<evidence type="ECO:0000255" key="3">
    <source>
        <dbReference type="PROSITE-ProRule" id="PRU00155"/>
    </source>
</evidence>
<evidence type="ECO:0000255" key="4">
    <source>
        <dbReference type="PROSITE-ProRule" id="PRU00190"/>
    </source>
</evidence>
<evidence type="ECO:0000255" key="5">
    <source>
        <dbReference type="PROSITE-ProRule" id="PRU00562"/>
    </source>
</evidence>
<evidence type="ECO:0000255" key="6">
    <source>
        <dbReference type="PROSITE-ProRule" id="PRU00901"/>
    </source>
</evidence>
<evidence type="ECO:0000256" key="7">
    <source>
        <dbReference type="SAM" id="MobiDB-lite"/>
    </source>
</evidence>
<reference key="1">
    <citation type="journal article" date="2005" name="Science">
        <title>The genome of the basidiomycetous yeast and human pathogen Cryptococcus neoformans.</title>
        <authorList>
            <person name="Loftus B.J."/>
            <person name="Fung E."/>
            <person name="Roncaglia P."/>
            <person name="Rowley D."/>
            <person name="Amedeo P."/>
            <person name="Bruno D."/>
            <person name="Vamathevan J."/>
            <person name="Miranda M."/>
            <person name="Anderson I.J."/>
            <person name="Fraser J.A."/>
            <person name="Allen J.E."/>
            <person name="Bosdet I.E."/>
            <person name="Brent M.R."/>
            <person name="Chiu R."/>
            <person name="Doering T.L."/>
            <person name="Donlin M.J."/>
            <person name="D'Souza C.A."/>
            <person name="Fox D.S."/>
            <person name="Grinberg V."/>
            <person name="Fu J."/>
            <person name="Fukushima M."/>
            <person name="Haas B.J."/>
            <person name="Huang J.C."/>
            <person name="Janbon G."/>
            <person name="Jones S.J.M."/>
            <person name="Koo H.L."/>
            <person name="Krzywinski M.I."/>
            <person name="Kwon-Chung K.J."/>
            <person name="Lengeler K.B."/>
            <person name="Maiti R."/>
            <person name="Marra M.A."/>
            <person name="Marra R.E."/>
            <person name="Mathewson C.A."/>
            <person name="Mitchell T.G."/>
            <person name="Pertea M."/>
            <person name="Riggs F.R."/>
            <person name="Salzberg S.L."/>
            <person name="Schein J.E."/>
            <person name="Shvartsbeyn A."/>
            <person name="Shin H."/>
            <person name="Shumway M."/>
            <person name="Specht C.A."/>
            <person name="Suh B.B."/>
            <person name="Tenney A."/>
            <person name="Utterback T.R."/>
            <person name="Wickes B.L."/>
            <person name="Wortman J.R."/>
            <person name="Wye N.H."/>
            <person name="Kronstad J.W."/>
            <person name="Lodge J.K."/>
            <person name="Heitman J."/>
            <person name="Davis R.W."/>
            <person name="Fraser C.M."/>
            <person name="Hyman R.W."/>
        </authorList>
    </citation>
    <scope>NUCLEOTIDE SEQUENCE [LARGE SCALE GENOMIC DNA]</scope>
    <source>
        <strain>B-3501A</strain>
    </source>
</reference>
<sequence length="834" mass="93483">MGDIIEGTKPTLDDLWAGDEDQKPQTPPVSPPRSPSFKHEHKSPFPGSTSPPPASPIGEEDLKPRTARASSSTSKVKSRKASPEEFKPVLIDDLPTAWDEAHETFEALEKCVYERKDIGLSKENDEMMVCECVYNRHDPDADPCGPDSDCINRALYIECIAGECRAGKHCHNQQFSKRQYANVDVVLTEKKGYGLRASSTIPANTLIYEYIGEVVAEKTFRKRMQQYADEGIRHFYFMMLQKEEYIDATKKGGIGRFANHSCNPNCEVQKWVVGRRLRMGIFTKRDVIKGEEITFNYNVDRYGHDAQTCYCGEPNCVGTIGGKTQTDIGTMNDLFLDALGITDEVEAMGMKGSKKKKSRQLDEDFVPILRPISAHEVQKVAAAIRQSMENKKMMSRLLQRIQMTDDGAMHRQLMRMHGFSLMYMVLTELADDNEIVLLALESMNKWKLQIRNKIEDSKIEEPVKALSQSGDEKICGLAKQLIEYWSTLELSYKIPRVSKIASLDADDEAGTQTIAEANVVSAARRPDAWENTQEIQIDIAPVRPRTLPVSRPRPPPPPPPLPVKKPALNSMSSTDRLKLDAIIAMAEQTVQAQAAAAAVEATASPQAGSSRSGSRPAEDEERRKRQKRTHMTEEELAEQKERRLRKLIGAVVVKSMNKYKDMMEHDTFKKYARECTDTLVKKEKKRNPSYQDVKHPSLSDDKKAKIKSFTKDYTHKILKHLKEKGKLRNPKSSSSLRTNSNDPRQAASSSTNGDTPSISTTPSQGATQRLRDGELVDDIFGADEDMVMDLDEDTPEMQNDHPAPPSVPPATPPLPPVHVEVVDNVSTPTSQWET</sequence>
<dbReference type="EC" id="2.1.1.359" evidence="2"/>
<dbReference type="EMBL" id="AAEY01000036">
    <property type="protein sequence ID" value="EAL19801.1"/>
    <property type="molecule type" value="Genomic_DNA"/>
</dbReference>
<dbReference type="RefSeq" id="XP_774448.1">
    <property type="nucleotide sequence ID" value="XM_769355.1"/>
</dbReference>
<dbReference type="SMR" id="P0CO29"/>
<dbReference type="GeneID" id="4937126"/>
<dbReference type="KEGG" id="cnb:CNBG0940"/>
<dbReference type="VEuPathDB" id="FungiDB:CNBG0940"/>
<dbReference type="HOGENOM" id="CLU_008492_1_3_1"/>
<dbReference type="OrthoDB" id="6262at5206"/>
<dbReference type="GO" id="GO:0005694">
    <property type="term" value="C:chromosome"/>
    <property type="evidence" value="ECO:0007669"/>
    <property type="project" value="UniProtKB-SubCell"/>
</dbReference>
<dbReference type="GO" id="GO:0005634">
    <property type="term" value="C:nucleus"/>
    <property type="evidence" value="ECO:0007669"/>
    <property type="project" value="UniProtKB-SubCell"/>
</dbReference>
<dbReference type="GO" id="GO:0140955">
    <property type="term" value="F:histone H3K36 trimethyltransferase activity"/>
    <property type="evidence" value="ECO:0007669"/>
    <property type="project" value="UniProtKB-EC"/>
</dbReference>
<dbReference type="GO" id="GO:0032259">
    <property type="term" value="P:methylation"/>
    <property type="evidence" value="ECO:0007669"/>
    <property type="project" value="UniProtKB-KW"/>
</dbReference>
<dbReference type="GO" id="GO:0006355">
    <property type="term" value="P:regulation of DNA-templated transcription"/>
    <property type="evidence" value="ECO:0007669"/>
    <property type="project" value="InterPro"/>
</dbReference>
<dbReference type="CDD" id="cd19172">
    <property type="entry name" value="SET_SETD2"/>
    <property type="match status" value="1"/>
</dbReference>
<dbReference type="FunFam" id="2.170.270.10:FF:000062">
    <property type="entry name" value="Histone-lysine N-methyltransferase, H3 lysine-36 specific"/>
    <property type="match status" value="1"/>
</dbReference>
<dbReference type="Gene3D" id="2.170.270.10">
    <property type="entry name" value="SET domain"/>
    <property type="match status" value="1"/>
</dbReference>
<dbReference type="Gene3D" id="1.10.1740.100">
    <property type="entry name" value="Set2, Rpb1 interacting domain"/>
    <property type="match status" value="1"/>
</dbReference>
<dbReference type="InterPro" id="IPR006560">
    <property type="entry name" value="AWS_dom"/>
</dbReference>
<dbReference type="InterPro" id="IPR003616">
    <property type="entry name" value="Post-SET_dom"/>
</dbReference>
<dbReference type="InterPro" id="IPR025788">
    <property type="entry name" value="Set2_fungi"/>
</dbReference>
<dbReference type="InterPro" id="IPR050777">
    <property type="entry name" value="SET2_Histone-Lys_MeTrsfase"/>
</dbReference>
<dbReference type="InterPro" id="IPR001214">
    <property type="entry name" value="SET_dom"/>
</dbReference>
<dbReference type="InterPro" id="IPR046341">
    <property type="entry name" value="SET_dom_sf"/>
</dbReference>
<dbReference type="InterPro" id="IPR044437">
    <property type="entry name" value="SETD2/Set2_SET"/>
</dbReference>
<dbReference type="InterPro" id="IPR013257">
    <property type="entry name" value="SRI"/>
</dbReference>
<dbReference type="InterPro" id="IPR038190">
    <property type="entry name" value="SRI_sf"/>
</dbReference>
<dbReference type="InterPro" id="IPR017923">
    <property type="entry name" value="TFIIS_N"/>
</dbReference>
<dbReference type="PANTHER" id="PTHR22884">
    <property type="entry name" value="SET DOMAIN PROTEINS"/>
    <property type="match status" value="1"/>
</dbReference>
<dbReference type="Pfam" id="PF17907">
    <property type="entry name" value="AWS"/>
    <property type="match status" value="1"/>
</dbReference>
<dbReference type="Pfam" id="PF08711">
    <property type="entry name" value="Med26"/>
    <property type="match status" value="1"/>
</dbReference>
<dbReference type="Pfam" id="PF00856">
    <property type="entry name" value="SET"/>
    <property type="match status" value="1"/>
</dbReference>
<dbReference type="Pfam" id="PF08236">
    <property type="entry name" value="SRI"/>
    <property type="match status" value="1"/>
</dbReference>
<dbReference type="SMART" id="SM00570">
    <property type="entry name" value="AWS"/>
    <property type="match status" value="1"/>
</dbReference>
<dbReference type="SMART" id="SM00508">
    <property type="entry name" value="PostSET"/>
    <property type="match status" value="1"/>
</dbReference>
<dbReference type="SMART" id="SM00317">
    <property type="entry name" value="SET"/>
    <property type="match status" value="1"/>
</dbReference>
<dbReference type="SUPFAM" id="SSF82199">
    <property type="entry name" value="SET domain"/>
    <property type="match status" value="1"/>
</dbReference>
<dbReference type="PROSITE" id="PS51215">
    <property type="entry name" value="AWS"/>
    <property type="match status" value="1"/>
</dbReference>
<dbReference type="PROSITE" id="PS50868">
    <property type="entry name" value="POST_SET"/>
    <property type="match status" value="1"/>
</dbReference>
<dbReference type="PROSITE" id="PS51568">
    <property type="entry name" value="SAM_MT43_SET2_1"/>
    <property type="match status" value="1"/>
</dbReference>
<dbReference type="PROSITE" id="PS50280">
    <property type="entry name" value="SET"/>
    <property type="match status" value="1"/>
</dbReference>
<feature type="chain" id="PRO_0000410119" description="Histone-lysine N-methyltransferase, H3 lysine-36 specific">
    <location>
        <begin position="1"/>
        <end position="834"/>
    </location>
</feature>
<feature type="domain" description="AWS" evidence="5">
    <location>
        <begin position="125"/>
        <end position="179"/>
    </location>
</feature>
<feature type="domain" description="SET" evidence="4">
    <location>
        <begin position="181"/>
        <end position="298"/>
    </location>
</feature>
<feature type="domain" description="Post-SET" evidence="3">
    <location>
        <begin position="305"/>
        <end position="321"/>
    </location>
</feature>
<feature type="region of interest" description="Disordered" evidence="7">
    <location>
        <begin position="1"/>
        <end position="83"/>
    </location>
</feature>
<feature type="region of interest" description="Disordered" evidence="7">
    <location>
        <begin position="531"/>
        <end position="568"/>
    </location>
</feature>
<feature type="region of interest" description="Disordered" evidence="7">
    <location>
        <begin position="601"/>
        <end position="638"/>
    </location>
</feature>
<feature type="region of interest" description="Disordered" evidence="7">
    <location>
        <begin position="680"/>
        <end position="703"/>
    </location>
</feature>
<feature type="region of interest" description="Disordered" evidence="7">
    <location>
        <begin position="720"/>
        <end position="818"/>
    </location>
</feature>
<feature type="compositionally biased region" description="Pro residues" evidence="7">
    <location>
        <begin position="25"/>
        <end position="34"/>
    </location>
</feature>
<feature type="compositionally biased region" description="Low complexity" evidence="7">
    <location>
        <begin position="541"/>
        <end position="550"/>
    </location>
</feature>
<feature type="compositionally biased region" description="Pro residues" evidence="7">
    <location>
        <begin position="551"/>
        <end position="563"/>
    </location>
</feature>
<feature type="compositionally biased region" description="Polar residues" evidence="7">
    <location>
        <begin position="604"/>
        <end position="613"/>
    </location>
</feature>
<feature type="compositionally biased region" description="Basic and acidic residues" evidence="7">
    <location>
        <begin position="692"/>
        <end position="703"/>
    </location>
</feature>
<feature type="compositionally biased region" description="Basic residues" evidence="7">
    <location>
        <begin position="720"/>
        <end position="729"/>
    </location>
</feature>
<feature type="compositionally biased region" description="Polar residues" evidence="7">
    <location>
        <begin position="730"/>
        <end position="767"/>
    </location>
</feature>
<feature type="compositionally biased region" description="Acidic residues" evidence="7">
    <location>
        <begin position="775"/>
        <end position="795"/>
    </location>
</feature>
<feature type="compositionally biased region" description="Pro residues" evidence="7">
    <location>
        <begin position="802"/>
        <end position="816"/>
    </location>
</feature>
<comment type="function">
    <text evidence="2">Histone methyltransferase that trimethylates histone H3 'Lys-36' forming H3K36me3. Involved in transcription elongation as well as in transcription repression.</text>
</comment>
<comment type="catalytic activity">
    <reaction evidence="2 6">
        <text>L-lysyl(36)-[histone H3] + 3 S-adenosyl-L-methionine = N(6),N(6),N(6)-trimethyl-L-lysyl(36)-[histone H3] + 3 S-adenosyl-L-homocysteine + 3 H(+)</text>
        <dbReference type="Rhea" id="RHEA:60324"/>
        <dbReference type="Rhea" id="RHEA-COMP:9785"/>
        <dbReference type="Rhea" id="RHEA-COMP:15536"/>
        <dbReference type="ChEBI" id="CHEBI:15378"/>
        <dbReference type="ChEBI" id="CHEBI:29969"/>
        <dbReference type="ChEBI" id="CHEBI:57856"/>
        <dbReference type="ChEBI" id="CHEBI:59789"/>
        <dbReference type="ChEBI" id="CHEBI:61961"/>
        <dbReference type="EC" id="2.1.1.359"/>
    </reaction>
</comment>
<comment type="subcellular location">
    <subcellularLocation>
        <location evidence="1">Nucleus</location>
    </subcellularLocation>
    <subcellularLocation>
        <location evidence="1">Chromosome</location>
    </subcellularLocation>
</comment>
<comment type="domain">
    <text evidence="1">The AWS and SET domains are necessary for transcription repression.</text>
</comment>
<comment type="similarity">
    <text evidence="6">Belongs to the class V-like SAM-binding methyltransferase superfamily. Histone-lysine methyltransferase family. SET2 subfamily.</text>
</comment>
<organism>
    <name type="scientific">Cryptococcus neoformans var. neoformans serotype D (strain B-3501A)</name>
    <name type="common">Filobasidiella neoformans</name>
    <dbReference type="NCBI Taxonomy" id="283643"/>
    <lineage>
        <taxon>Eukaryota</taxon>
        <taxon>Fungi</taxon>
        <taxon>Dikarya</taxon>
        <taxon>Basidiomycota</taxon>
        <taxon>Agaricomycotina</taxon>
        <taxon>Tremellomycetes</taxon>
        <taxon>Tremellales</taxon>
        <taxon>Cryptococcaceae</taxon>
        <taxon>Cryptococcus</taxon>
        <taxon>Cryptococcus neoformans species complex</taxon>
    </lineage>
</organism>
<gene>
    <name type="primary">SET2</name>
    <name type="ordered locus">CNBG0940</name>
</gene>
<keyword id="KW-0158">Chromosome</keyword>
<keyword id="KW-0489">Methyltransferase</keyword>
<keyword id="KW-0539">Nucleus</keyword>
<keyword id="KW-0678">Repressor</keyword>
<keyword id="KW-0949">S-adenosyl-L-methionine</keyword>
<keyword id="KW-0804">Transcription</keyword>
<keyword id="KW-0805">Transcription regulation</keyword>
<keyword id="KW-0808">Transferase</keyword>
<name>SET2_CRYNB</name>